<keyword id="KW-0175">Coiled coil</keyword>
<keyword id="KW-1185">Reference proteome</keyword>
<proteinExistence type="predicted"/>
<protein>
    <recommendedName>
        <fullName>Putative MSV199 domain-containing protein 148R</fullName>
    </recommendedName>
</protein>
<dbReference type="EMBL" id="AF303741">
    <property type="protein sequence ID" value="AAB94463.1"/>
    <property type="molecule type" value="Genomic_DNA"/>
</dbReference>
<dbReference type="PIR" id="T03089">
    <property type="entry name" value="T03089"/>
</dbReference>
<dbReference type="RefSeq" id="NP_149611.1">
    <property type="nucleotide sequence ID" value="NC_003038.1"/>
</dbReference>
<dbReference type="SMR" id="O55752"/>
<dbReference type="KEGG" id="vg:1733196"/>
<dbReference type="OrthoDB" id="13638at10239"/>
<dbReference type="Proteomes" id="UP000001359">
    <property type="component" value="Genome"/>
</dbReference>
<dbReference type="InterPro" id="IPR022549">
    <property type="entry name" value="DUF3627"/>
</dbReference>
<dbReference type="InterPro" id="IPR018879">
    <property type="entry name" value="MSV199_dom"/>
</dbReference>
<dbReference type="Pfam" id="PF12299">
    <property type="entry name" value="DUF3627"/>
    <property type="match status" value="1"/>
</dbReference>
<dbReference type="Pfam" id="PF10553">
    <property type="entry name" value="MSV199"/>
    <property type="match status" value="1"/>
</dbReference>
<organismHost>
    <name type="scientific">Acheta domesticus</name>
    <name type="common">House cricket</name>
    <dbReference type="NCBI Taxonomy" id="6997"/>
</organismHost>
<organismHost>
    <name type="scientific">Chilo suppressalis</name>
    <name type="common">Asiatic rice borer moth</name>
    <dbReference type="NCBI Taxonomy" id="168631"/>
</organismHost>
<organismHost>
    <name type="scientific">Gryllus bimaculatus</name>
    <name type="common">Two-spotted cricket</name>
    <dbReference type="NCBI Taxonomy" id="6999"/>
</organismHost>
<organismHost>
    <name type="scientific">Gryllus campestris</name>
    <dbReference type="NCBI Taxonomy" id="58607"/>
</organismHost>
<organismHost>
    <name type="scientific">Spodoptera frugiperda</name>
    <name type="common">Fall armyworm</name>
    <dbReference type="NCBI Taxonomy" id="7108"/>
</organismHost>
<feature type="chain" id="PRO_0000377918" description="Putative MSV199 domain-containing protein 148R">
    <location>
        <begin position="1"/>
        <end position="414"/>
    </location>
</feature>
<feature type="coiled-coil region" evidence="1">
    <location>
        <begin position="209"/>
        <end position="293"/>
    </location>
</feature>
<reference key="1">
    <citation type="journal article" date="2001" name="Virology">
        <title>Analysis of the first complete DNA sequence of an invertebrate iridovirus: coding strategy of the genome of Chilo iridescent virus.</title>
        <authorList>
            <person name="Jakob N.J."/>
            <person name="Mueller K."/>
            <person name="Bahr U."/>
            <person name="Darai G."/>
        </authorList>
    </citation>
    <scope>NUCLEOTIDE SEQUENCE [LARGE SCALE GENOMIC DNA]</scope>
</reference>
<reference key="2">
    <citation type="journal article" date="2007" name="Virol. J.">
        <title>Comparative genomic analysis of the family Iridoviridae: re-annotating and defining the core set of iridovirus genes.</title>
        <authorList>
            <person name="Eaton H.E."/>
            <person name="Metcalf J."/>
            <person name="Penny E."/>
            <person name="Tcherepanov V."/>
            <person name="Upton C."/>
            <person name="Brunetti C.R."/>
        </authorList>
    </citation>
    <scope>GENOME REANNOTATION</scope>
</reference>
<sequence length="414" mass="49457">MLLKIKIKIRLFEKRYTIYFFLLKGKNKEEMEIIKKEFEHLVISELESSMLQKALDYSLTIVDIIKFVEITNFDIDPFMIDKFWHTMYDNSLLYISRDILEWMGYTGEFGEQRKAFKKLLKRKNINFTELSNNDPTKHLYPEIQKDSLLLSNAVVSQSKWIIMNSDDFKDSILMLNTKNSGKIRKYYRSFEKLLKLNLLYTLKFRERADKMQISSLETMMEEMRLERKQSEERSIKQEQLLLSIGYNLKELQEQKEEDTQKIDVLIDQNEDLKQNIEETNDKLDSVVEKLGIAVEDRAPRLKRASIRERFVLFKKNNSTNEIYQYYAIRGQSVYVNGRLSKLQSEKYPDMIILIDIICQPNPRNLFLRFKERIDGKPEWENNFIYAGNNVGCSFKLEKEMINIFKSLDEEKRDV</sequence>
<accession>O55752</accession>
<evidence type="ECO:0000255" key="1"/>
<gene>
    <name type="ORF">IIV6-148R</name>
</gene>
<name>148R_IIV6</name>
<organism>
    <name type="scientific">Invertebrate iridescent virus 6</name>
    <name type="common">IIV-6</name>
    <name type="synonym">Chilo iridescent virus</name>
    <dbReference type="NCBI Taxonomy" id="176652"/>
    <lineage>
        <taxon>Viruses</taxon>
        <taxon>Varidnaviria</taxon>
        <taxon>Bamfordvirae</taxon>
        <taxon>Nucleocytoviricota</taxon>
        <taxon>Megaviricetes</taxon>
        <taxon>Pimascovirales</taxon>
        <taxon>Iridoviridae</taxon>
        <taxon>Betairidovirinae</taxon>
        <taxon>Iridovirus</taxon>
    </lineage>
</organism>